<reference key="1">
    <citation type="journal article" date="2011" name="J. Bacteriol.">
        <title>Comparative genomics of 28 Salmonella enterica isolates: evidence for CRISPR-mediated adaptive sublineage evolution.</title>
        <authorList>
            <person name="Fricke W.F."/>
            <person name="Mammel M.K."/>
            <person name="McDermott P.F."/>
            <person name="Tartera C."/>
            <person name="White D.G."/>
            <person name="Leclerc J.E."/>
            <person name="Ravel J."/>
            <person name="Cebula T.A."/>
        </authorList>
    </citation>
    <scope>NUCLEOTIDE SEQUENCE [LARGE SCALE GENOMIC DNA]</scope>
    <source>
        <strain>SL476</strain>
    </source>
</reference>
<comment type="catalytic activity">
    <reaction evidence="1">
        <text>tRNA(Gln) + L-glutamine + ATP = L-glutaminyl-tRNA(Gln) + AMP + diphosphate</text>
        <dbReference type="Rhea" id="RHEA:20121"/>
        <dbReference type="Rhea" id="RHEA-COMP:9662"/>
        <dbReference type="Rhea" id="RHEA-COMP:9681"/>
        <dbReference type="ChEBI" id="CHEBI:30616"/>
        <dbReference type="ChEBI" id="CHEBI:33019"/>
        <dbReference type="ChEBI" id="CHEBI:58359"/>
        <dbReference type="ChEBI" id="CHEBI:78442"/>
        <dbReference type="ChEBI" id="CHEBI:78521"/>
        <dbReference type="ChEBI" id="CHEBI:456215"/>
        <dbReference type="EC" id="6.1.1.18"/>
    </reaction>
</comment>
<comment type="subunit">
    <text evidence="1">Monomer.</text>
</comment>
<comment type="subcellular location">
    <subcellularLocation>
        <location evidence="1">Cytoplasm</location>
    </subcellularLocation>
</comment>
<comment type="similarity">
    <text evidence="1">Belongs to the class-I aminoacyl-tRNA synthetase family.</text>
</comment>
<gene>
    <name evidence="1" type="primary">glnS</name>
    <name type="ordered locus">SeHA_C0805</name>
</gene>
<keyword id="KW-0030">Aminoacyl-tRNA synthetase</keyword>
<keyword id="KW-0067">ATP-binding</keyword>
<keyword id="KW-0963">Cytoplasm</keyword>
<keyword id="KW-0436">Ligase</keyword>
<keyword id="KW-0547">Nucleotide-binding</keyword>
<keyword id="KW-0648">Protein biosynthesis</keyword>
<protein>
    <recommendedName>
        <fullName evidence="1">Glutamine--tRNA ligase</fullName>
        <ecNumber evidence="1">6.1.1.18</ecNumber>
    </recommendedName>
    <alternativeName>
        <fullName evidence="1">Glutaminyl-tRNA synthetase</fullName>
        <shortName evidence="1">GlnRS</shortName>
    </alternativeName>
</protein>
<feature type="chain" id="PRO_1000095512" description="Glutamine--tRNA ligase">
    <location>
        <begin position="1"/>
        <end position="555"/>
    </location>
</feature>
<feature type="region of interest" description="Interaction with tRNA" evidence="1">
    <location>
        <begin position="317"/>
        <end position="324"/>
    </location>
</feature>
<feature type="short sequence motif" description="'HIGH' region" evidence="1">
    <location>
        <begin position="34"/>
        <end position="44"/>
    </location>
</feature>
<feature type="short sequence motif" description="'KMSKS' region" evidence="1">
    <location>
        <begin position="268"/>
        <end position="272"/>
    </location>
</feature>
<feature type="binding site" evidence="1">
    <location>
        <begin position="35"/>
        <end position="37"/>
    </location>
    <ligand>
        <name>ATP</name>
        <dbReference type="ChEBI" id="CHEBI:30616"/>
    </ligand>
</feature>
<feature type="binding site" evidence="1">
    <location>
        <begin position="41"/>
        <end position="47"/>
    </location>
    <ligand>
        <name>ATP</name>
        <dbReference type="ChEBI" id="CHEBI:30616"/>
    </ligand>
</feature>
<feature type="binding site" evidence="1">
    <location>
        <position position="67"/>
    </location>
    <ligand>
        <name>L-glutamine</name>
        <dbReference type="ChEBI" id="CHEBI:58359"/>
    </ligand>
</feature>
<feature type="binding site" evidence="1">
    <location>
        <position position="212"/>
    </location>
    <ligand>
        <name>L-glutamine</name>
        <dbReference type="ChEBI" id="CHEBI:58359"/>
    </ligand>
</feature>
<feature type="binding site" evidence="1">
    <location>
        <position position="231"/>
    </location>
    <ligand>
        <name>ATP</name>
        <dbReference type="ChEBI" id="CHEBI:30616"/>
    </ligand>
</feature>
<feature type="binding site" evidence="1">
    <location>
        <begin position="261"/>
        <end position="262"/>
    </location>
    <ligand>
        <name>ATP</name>
        <dbReference type="ChEBI" id="CHEBI:30616"/>
    </ligand>
</feature>
<feature type="binding site" evidence="1">
    <location>
        <begin position="269"/>
        <end position="271"/>
    </location>
    <ligand>
        <name>ATP</name>
        <dbReference type="ChEBI" id="CHEBI:30616"/>
    </ligand>
</feature>
<evidence type="ECO:0000255" key="1">
    <source>
        <dbReference type="HAMAP-Rule" id="MF_00126"/>
    </source>
</evidence>
<accession>B4TB84</accession>
<proteinExistence type="inferred from homology"/>
<organism>
    <name type="scientific">Salmonella heidelberg (strain SL476)</name>
    <dbReference type="NCBI Taxonomy" id="454169"/>
    <lineage>
        <taxon>Bacteria</taxon>
        <taxon>Pseudomonadati</taxon>
        <taxon>Pseudomonadota</taxon>
        <taxon>Gammaproteobacteria</taxon>
        <taxon>Enterobacterales</taxon>
        <taxon>Enterobacteriaceae</taxon>
        <taxon>Salmonella</taxon>
    </lineage>
</organism>
<dbReference type="EC" id="6.1.1.18" evidence="1"/>
<dbReference type="EMBL" id="CP001120">
    <property type="protein sequence ID" value="ACF68510.1"/>
    <property type="molecule type" value="Genomic_DNA"/>
</dbReference>
<dbReference type="RefSeq" id="WP_001287181.1">
    <property type="nucleotide sequence ID" value="NC_011083.1"/>
</dbReference>
<dbReference type="SMR" id="B4TB84"/>
<dbReference type="KEGG" id="seh:SeHA_C0805"/>
<dbReference type="HOGENOM" id="CLU_001882_2_3_6"/>
<dbReference type="Proteomes" id="UP000001866">
    <property type="component" value="Chromosome"/>
</dbReference>
<dbReference type="GO" id="GO:0005829">
    <property type="term" value="C:cytosol"/>
    <property type="evidence" value="ECO:0007669"/>
    <property type="project" value="TreeGrafter"/>
</dbReference>
<dbReference type="GO" id="GO:0005524">
    <property type="term" value="F:ATP binding"/>
    <property type="evidence" value="ECO:0007669"/>
    <property type="project" value="UniProtKB-UniRule"/>
</dbReference>
<dbReference type="GO" id="GO:0004819">
    <property type="term" value="F:glutamine-tRNA ligase activity"/>
    <property type="evidence" value="ECO:0007669"/>
    <property type="project" value="UniProtKB-UniRule"/>
</dbReference>
<dbReference type="GO" id="GO:0006425">
    <property type="term" value="P:glutaminyl-tRNA aminoacylation"/>
    <property type="evidence" value="ECO:0007669"/>
    <property type="project" value="InterPro"/>
</dbReference>
<dbReference type="GO" id="GO:0006424">
    <property type="term" value="P:glutamyl-tRNA aminoacylation"/>
    <property type="evidence" value="ECO:0007669"/>
    <property type="project" value="UniProtKB-UniRule"/>
</dbReference>
<dbReference type="CDD" id="cd00807">
    <property type="entry name" value="GlnRS_core"/>
    <property type="match status" value="1"/>
</dbReference>
<dbReference type="FunFam" id="1.10.1160.10:FF:000001">
    <property type="entry name" value="Glutamine--tRNA ligase"/>
    <property type="match status" value="1"/>
</dbReference>
<dbReference type="FunFam" id="2.40.240.10:FF:000001">
    <property type="entry name" value="Glutamine--tRNA ligase"/>
    <property type="match status" value="1"/>
</dbReference>
<dbReference type="FunFam" id="2.40.240.10:FF:000003">
    <property type="entry name" value="Glutamine--tRNA ligase"/>
    <property type="match status" value="1"/>
</dbReference>
<dbReference type="FunFam" id="3.90.800.10:FF:000001">
    <property type="entry name" value="Glutamine--tRNA ligase"/>
    <property type="match status" value="1"/>
</dbReference>
<dbReference type="FunFam" id="3.40.50.620:FF:000037">
    <property type="entry name" value="Glutamine--tRNA ligase cytoplasmic"/>
    <property type="match status" value="1"/>
</dbReference>
<dbReference type="Gene3D" id="1.10.1160.10">
    <property type="entry name" value="Glutamyl-trna Synthetase, Domain 2"/>
    <property type="match status" value="1"/>
</dbReference>
<dbReference type="Gene3D" id="3.90.800.10">
    <property type="entry name" value="Glutamyl-tRNA Synthetase, Domain 3"/>
    <property type="match status" value="1"/>
</dbReference>
<dbReference type="Gene3D" id="3.40.50.620">
    <property type="entry name" value="HUPs"/>
    <property type="match status" value="1"/>
</dbReference>
<dbReference type="Gene3D" id="2.40.240.10">
    <property type="entry name" value="Ribosomal Protein L25, Chain P"/>
    <property type="match status" value="2"/>
</dbReference>
<dbReference type="HAMAP" id="MF_00126">
    <property type="entry name" value="Gln_tRNA_synth"/>
    <property type="match status" value="1"/>
</dbReference>
<dbReference type="InterPro" id="IPR001412">
    <property type="entry name" value="aa-tRNA-synth_I_CS"/>
</dbReference>
<dbReference type="InterPro" id="IPR004514">
    <property type="entry name" value="Gln-tRNA-synth"/>
</dbReference>
<dbReference type="InterPro" id="IPR050132">
    <property type="entry name" value="Gln/Glu-tRNA_Ligase"/>
</dbReference>
<dbReference type="InterPro" id="IPR022861">
    <property type="entry name" value="Gln_tRNA_ligase_bac"/>
</dbReference>
<dbReference type="InterPro" id="IPR000924">
    <property type="entry name" value="Glu/Gln-tRNA-synth"/>
</dbReference>
<dbReference type="InterPro" id="IPR020058">
    <property type="entry name" value="Glu/Gln-tRNA-synth_Ib_cat-dom"/>
</dbReference>
<dbReference type="InterPro" id="IPR020059">
    <property type="entry name" value="Glu/Gln-tRNA-synth_Ib_codon-bd"/>
</dbReference>
<dbReference type="InterPro" id="IPR020061">
    <property type="entry name" value="Glu_tRNA_lig_a-bdl"/>
</dbReference>
<dbReference type="InterPro" id="IPR020056">
    <property type="entry name" value="Rbsml_bL25/Gln-tRNA_synth_N"/>
</dbReference>
<dbReference type="InterPro" id="IPR011035">
    <property type="entry name" value="Ribosomal_bL25/Gln-tRNA_synth"/>
</dbReference>
<dbReference type="InterPro" id="IPR014729">
    <property type="entry name" value="Rossmann-like_a/b/a_fold"/>
</dbReference>
<dbReference type="InterPro" id="IPR049437">
    <property type="entry name" value="tRNA-synt_1c_C2"/>
</dbReference>
<dbReference type="NCBIfam" id="TIGR00440">
    <property type="entry name" value="glnS"/>
    <property type="match status" value="1"/>
</dbReference>
<dbReference type="NCBIfam" id="NF011291">
    <property type="entry name" value="PRK14703.1"/>
    <property type="match status" value="1"/>
</dbReference>
<dbReference type="PANTHER" id="PTHR43097:SF5">
    <property type="entry name" value="GLUTAMATE--TRNA LIGASE"/>
    <property type="match status" value="1"/>
</dbReference>
<dbReference type="PANTHER" id="PTHR43097">
    <property type="entry name" value="GLUTAMINE-TRNA LIGASE"/>
    <property type="match status" value="1"/>
</dbReference>
<dbReference type="Pfam" id="PF00749">
    <property type="entry name" value="tRNA-synt_1c"/>
    <property type="match status" value="1"/>
</dbReference>
<dbReference type="Pfam" id="PF03950">
    <property type="entry name" value="tRNA-synt_1c_C"/>
    <property type="match status" value="1"/>
</dbReference>
<dbReference type="Pfam" id="PF20974">
    <property type="entry name" value="tRNA-synt_1c_C2"/>
    <property type="match status" value="1"/>
</dbReference>
<dbReference type="PRINTS" id="PR00987">
    <property type="entry name" value="TRNASYNTHGLU"/>
</dbReference>
<dbReference type="SUPFAM" id="SSF52374">
    <property type="entry name" value="Nucleotidylyl transferase"/>
    <property type="match status" value="1"/>
</dbReference>
<dbReference type="SUPFAM" id="SSF50715">
    <property type="entry name" value="Ribosomal protein L25-like"/>
    <property type="match status" value="1"/>
</dbReference>
<dbReference type="PROSITE" id="PS00178">
    <property type="entry name" value="AA_TRNA_LIGASE_I"/>
    <property type="match status" value="1"/>
</dbReference>
<name>SYQ_SALHS</name>
<sequence>MSEAEARPTNFIRQIIDEDLASGKHTTVHTRFPPEPNGYLHIGHAKSICLNFGIAQDYQGQCNLRFDDTNPVKEDIEYVDSIKNDVEWLGFHWSGDIRYSSDYFDQLHAYAVELINKGLAYVDELTPEQIREYRGTLTAPGKNSPFRDRSVEENLALFEKMRTGGFEEGKACLRAKIDMASPFIVMRDPVLYRIKFAEHHQTGNKWCIYPMYDFTHCISDALEGITHSLCTLEFQDNRRLYDWVLDNITIPVHPRQYEFSRLNLEYTVMSKRKLNLLVTDKHVEGWDDPRMPTISGLRRRGYTAASIREFCKRIGVTKQDNTIEMASLESCIREDLNENAPRAMAVIDPVKLVIENYPQGESEMVTMPNHPNKPEMGSREVPFSGEIWIDRADFREEANKQYKRLVMGKEVRLRNAYVIKAERVEKDAEGNITTIFCTYDADTLSKDPADGRKVKGVIHWVSAAHALPIEIRLYDRLFSVPNPGAAEDFLSVINPESLVIKQGYGEPSLKAAVAGKAFQFEREGYFCLDSRYATADKLVFNRTVGLRDTWAKAGE</sequence>